<sequence length="525" mass="55654">MKCKKPSALFSALALVGALGAASVLGAASANSASPVAAATVQASSGSAKTSVAATSKSQDGDVLAAIVRDLKITKTQAKKRIKLEEKARQLEPRLQKKLGKKFAGLWISKNGKKIVVGVTTKKAAKVVKKAGATPKIVKSNLTTLKKRATKISKNAPSDIKNVNSWWVDPATNKVVIEARSKKAAKAAATAAGLTAGTYEITVSDDVIVPVRDYWGGDALSGCTLAFPVYGGFLTAGHCAVEGKGHILKTEMTGGQIGTVEASQFGDGIDAAWAKNYGDWNGRGRVTHWNGGGGVDIKGSNEAAVGAHMCKSGRTTKWTCGYLLRKDVSVNYGNGHIVTLNETSACALGGDSGGAYVWNDQAQGITSGSNMDTNNCRSFYQPVNTVLNKWKLSLVTSTDVTTSYVQGYQNNCIDVPNSDFTDGKQLQVWNCNGTNAQKVSFHPDGTLRINGKCLDARWAWTHNGTEVQLMNCNGHIAQKFTLNGAGDLVNVHANKCVDVKDWGGQGGKLQLWECSGGANQKWWRR</sequence>
<name>SP1_RARFA</name>
<accession>Q05308</accession>
<dbReference type="EC" id="3.4.21.-"/>
<dbReference type="EMBL" id="D10753">
    <property type="protein sequence ID" value="BAA01585.1"/>
    <property type="molecule type" value="Genomic_DNA"/>
</dbReference>
<dbReference type="PIR" id="A45053">
    <property type="entry name" value="A45053"/>
</dbReference>
<dbReference type="RefSeq" id="WP_170222524.1">
    <property type="nucleotide sequence ID" value="NZ_BAAASV010000002.1"/>
</dbReference>
<dbReference type="SMR" id="Q05308"/>
<dbReference type="CAZy" id="CBM13">
    <property type="family name" value="Carbohydrate-Binding Module Family 13"/>
</dbReference>
<dbReference type="MEROPS" id="S01.276"/>
<dbReference type="GO" id="GO:0005576">
    <property type="term" value="C:extracellular region"/>
    <property type="evidence" value="ECO:0007669"/>
    <property type="project" value="UniProtKB-SubCell"/>
</dbReference>
<dbReference type="GO" id="GO:0005537">
    <property type="term" value="F:D-mannose binding"/>
    <property type="evidence" value="ECO:0007669"/>
    <property type="project" value="UniProtKB-KW"/>
</dbReference>
<dbReference type="GO" id="GO:0004252">
    <property type="term" value="F:serine-type endopeptidase activity"/>
    <property type="evidence" value="ECO:0007669"/>
    <property type="project" value="InterPro"/>
</dbReference>
<dbReference type="GO" id="GO:0006508">
    <property type="term" value="P:proteolysis"/>
    <property type="evidence" value="ECO:0007669"/>
    <property type="project" value="UniProtKB-KW"/>
</dbReference>
<dbReference type="CDD" id="cd21112">
    <property type="entry name" value="alphaLP-like"/>
    <property type="match status" value="1"/>
</dbReference>
<dbReference type="CDD" id="cd23452">
    <property type="entry name" value="beta-trefoil_Ricin_RPI"/>
    <property type="match status" value="1"/>
</dbReference>
<dbReference type="Gene3D" id="2.80.10.50">
    <property type="match status" value="1"/>
</dbReference>
<dbReference type="Gene3D" id="3.30.300.50">
    <property type="match status" value="2"/>
</dbReference>
<dbReference type="Gene3D" id="2.40.10.10">
    <property type="entry name" value="Trypsin-like serine proteases"/>
    <property type="match status" value="2"/>
</dbReference>
<dbReference type="InterPro" id="IPR004236">
    <property type="entry name" value="Pept_S1_alpha_lytic"/>
</dbReference>
<dbReference type="InterPro" id="IPR001316">
    <property type="entry name" value="Pept_S1A_streptogrisin"/>
</dbReference>
<dbReference type="InterPro" id="IPR009003">
    <property type="entry name" value="Peptidase_S1_PA"/>
</dbReference>
<dbReference type="InterPro" id="IPR043504">
    <property type="entry name" value="Peptidase_S1_PA_chymotrypsin"/>
</dbReference>
<dbReference type="InterPro" id="IPR035992">
    <property type="entry name" value="Ricin_B-like_lectins"/>
</dbReference>
<dbReference type="InterPro" id="IPR000772">
    <property type="entry name" value="Ricin_B_lectin"/>
</dbReference>
<dbReference type="InterPro" id="IPR035070">
    <property type="entry name" value="Streptogrisin_prodomain"/>
</dbReference>
<dbReference type="Pfam" id="PF02983">
    <property type="entry name" value="Pro_Al_protease"/>
    <property type="match status" value="1"/>
</dbReference>
<dbReference type="Pfam" id="PF00652">
    <property type="entry name" value="Ricin_B_lectin"/>
    <property type="match status" value="1"/>
</dbReference>
<dbReference type="PRINTS" id="PR00861">
    <property type="entry name" value="ALYTICPTASE"/>
</dbReference>
<dbReference type="SMART" id="SM00458">
    <property type="entry name" value="RICIN"/>
    <property type="match status" value="1"/>
</dbReference>
<dbReference type="SUPFAM" id="SSF50370">
    <property type="entry name" value="Ricin B-like lectins"/>
    <property type="match status" value="1"/>
</dbReference>
<dbReference type="SUPFAM" id="SSF50494">
    <property type="entry name" value="Trypsin-like serine proteases"/>
    <property type="match status" value="1"/>
</dbReference>
<dbReference type="PROSITE" id="PS50231">
    <property type="entry name" value="RICIN_B_LECTIN"/>
    <property type="match status" value="1"/>
</dbReference>
<dbReference type="PROSITE" id="PS00134">
    <property type="entry name" value="TRYPSIN_HIS"/>
    <property type="match status" value="1"/>
</dbReference>
<dbReference type="PROSITE" id="PS00135">
    <property type="entry name" value="TRYPSIN_SER"/>
    <property type="match status" value="1"/>
</dbReference>
<comment type="function">
    <text>Major serine protease exhibiting lytic activity toward living yeast cells. Similar to elastase in its substrate specificity and has a lectin-like affinity for mannose. Mannoproteins may be the native substrate for RPI.</text>
</comment>
<comment type="subcellular location">
    <subcellularLocation>
        <location>Secreted</location>
    </subcellularLocation>
</comment>
<comment type="similarity">
    <text evidence="4">Belongs to the peptidase S1 family.</text>
</comment>
<evidence type="ECO:0000250" key="1"/>
<evidence type="ECO:0000255" key="2"/>
<evidence type="ECO:0000255" key="3">
    <source>
        <dbReference type="PROSITE-ProRule" id="PRU00174"/>
    </source>
</evidence>
<evidence type="ECO:0000305" key="4"/>
<protein>
    <recommendedName>
        <fullName>Serine protease 1</fullName>
        <ecNumber>3.4.21.-</ecNumber>
    </recommendedName>
    <alternativeName>
        <fullName>Serine protease I</fullName>
        <shortName>RPI</shortName>
    </alternativeName>
</protein>
<reference key="1">
    <citation type="journal article" date="1992" name="J. Biol. Chem.">
        <title>Molecular structure of Rarobacter faecitabidus protease I. A yeast-lytic serine protease having mannose-binding activity.</title>
        <authorList>
            <person name="Shimoi H."/>
            <person name="Iimura Y."/>
            <person name="Obata T."/>
            <person name="Tadenuma M."/>
        </authorList>
    </citation>
    <scope>NUCLEOTIDE SEQUENCE [GENOMIC DNA]</scope>
    <scope>PROTEIN SEQUENCE OF 212-222; 224-238 AND 240-244</scope>
    <source>
        <strain>YLM-50</strain>
    </source>
</reference>
<reference key="2">
    <citation type="journal article" date="1991" name="J. Biochem.">
        <title>Characterization of Rarobacter faecitabidus protease I, a yeast-lytic serine protease having mannose-binding activity.</title>
        <authorList>
            <person name="Shimoi H."/>
            <person name="Tadenuma M."/>
        </authorList>
    </citation>
    <scope>PROTEIN SEQUENCE OF 212-247</scope>
</reference>
<proteinExistence type="evidence at protein level"/>
<keyword id="KW-0903">Direct protein sequencing</keyword>
<keyword id="KW-1015">Disulfide bond</keyword>
<keyword id="KW-0378">Hydrolase</keyword>
<keyword id="KW-0430">Lectin</keyword>
<keyword id="KW-0465">Mannose-binding</keyword>
<keyword id="KW-0645">Protease</keyword>
<keyword id="KW-0964">Secreted</keyword>
<keyword id="KW-0720">Serine protease</keyword>
<keyword id="KW-0732">Signal</keyword>
<keyword id="KW-0865">Zymogen</keyword>
<organism>
    <name type="scientific">Rarobacter faecitabidus</name>
    <dbReference type="NCBI Taxonomy" id="13243"/>
    <lineage>
        <taxon>Bacteria</taxon>
        <taxon>Bacillati</taxon>
        <taxon>Actinomycetota</taxon>
        <taxon>Actinomycetes</taxon>
        <taxon>Micrococcales</taxon>
        <taxon>Rarobacteraceae</taxon>
        <taxon>Rarobacter</taxon>
    </lineage>
</organism>
<feature type="signal peptide" evidence="2">
    <location>
        <begin position="1"/>
        <end position="32"/>
    </location>
</feature>
<feature type="propeptide" id="PRO_0000026919" evidence="2">
    <location>
        <begin position="33"/>
        <end position="211"/>
    </location>
</feature>
<feature type="chain" id="PRO_0000026920" description="Serine protease 1">
    <location>
        <begin position="212"/>
        <end position="525"/>
    </location>
</feature>
<feature type="domain" description="Ricin B-type lectin" evidence="3">
    <location>
        <begin position="396"/>
        <end position="525"/>
    </location>
</feature>
<feature type="region of interest" description="Essential for the lytic activity, but not for protease function">
    <location>
        <begin position="401"/>
        <end position="525"/>
    </location>
</feature>
<feature type="active site" description="Charge relay system" evidence="1">
    <location>
        <position position="238"/>
    </location>
</feature>
<feature type="active site" description="Charge relay system" evidence="1">
    <location>
        <position position="270"/>
    </location>
</feature>
<feature type="active site" description="Charge relay system" evidence="1">
    <location>
        <position position="352"/>
    </location>
</feature>
<feature type="disulfide bond" evidence="3">
    <location>
        <begin position="223"/>
        <end position="239"/>
    </location>
</feature>
<feature type="disulfide bond" evidence="3">
    <location>
        <begin position="310"/>
        <end position="320"/>
    </location>
</feature>
<feature type="disulfide bond" evidence="3">
    <location>
        <begin position="346"/>
        <end position="376"/>
    </location>
</feature>
<feature type="disulfide bond" evidence="3">
    <location>
        <begin position="412"/>
        <end position="431"/>
    </location>
</feature>
<feature type="disulfide bond" evidence="3">
    <location>
        <begin position="453"/>
        <end position="472"/>
    </location>
</feature>
<feature type="disulfide bond" evidence="3">
    <location>
        <begin position="496"/>
        <end position="514"/>
    </location>
</feature>